<name>IF2_PSYCK</name>
<sequence>MADKTVKELADMVSKTASAVQQQLVDAGLPARAEGDLVTELEQEKLVTYLKQSHGQEEKRRISLKSKTTSTARVTGSSGKSKSVNVEVRKKKVFEKPDPEKMAEELAAREQAMIESQARAAKDAEDRAATKKKSEERQAATLAAMRASLGSSKKSDDKNDDISTSVVVKKGGKTTIEVKPKDQPKKKVTATKPKVETAVERKAREVREKEEARLREIETETRRTQAEEAQKRTLEQMRKMAGQYTDQPATEVRKDEPLAEGLVGDALEESFEKERREIKRGTSTTSARGRGRRKNQDEREIKNRKNGLRSSQSSQHKFEKPVEKIVYDVEISEQITVSDLAQRMAVKAREVTKLLMKMGEIARESDMIDQATASLIVEEMGHNPVPVSDTKVEDDLQDAVDERSSNVQTRPPVVTIMGHVDHGKTSLLDKIRETKVATGEAGGITQHIGAYHVKTARGVITFLDTPGHAAFSAMRSRGAQATDIVVLVVAADDGMMPQTEEAIDHARAAGTPLIVAINKMDKPSADPDRVLNELTAKEVVSEDWGGDTPMARISAKTGDGIDELLELISLQAELMELEAPLDGPAQGVVIESRLEKGRGPVVSVLVKKGTLKQGDLVLAGEYYGKVRAMTDEHGKRIQSAGPSIPVEILGLPETPAAGSEFLVLTDEKKAREVADFRTNRERERQLERQNAMRLESMFDQMEQGNVSYLNIVLKTDVRGSLEALLAALNELSTDEVKVRVISSGVGPISESDVTLAESSEAVLLGFNVRADATARRKSDSANMDIRYYSVIYGLIDDVKAAMSGMLAPEHREKILGVADVREVFRSSKFGAAAGCMVVEGTIYRNKPIRVLRNDQVIFTGQLQSLRRYKEDVNEVRTGMECGLAVRGYDVEAGDKIEVFEIQEFARTI</sequence>
<feature type="chain" id="PRO_1000008308" description="Translation initiation factor IF-2">
    <location>
        <begin position="1"/>
        <end position="908"/>
    </location>
</feature>
<feature type="domain" description="tr-type G">
    <location>
        <begin position="409"/>
        <end position="578"/>
    </location>
</feature>
<feature type="region of interest" description="Disordered" evidence="3">
    <location>
        <begin position="52"/>
        <end position="318"/>
    </location>
</feature>
<feature type="region of interest" description="G1" evidence="1">
    <location>
        <begin position="418"/>
        <end position="425"/>
    </location>
</feature>
<feature type="region of interest" description="G2" evidence="1">
    <location>
        <begin position="443"/>
        <end position="447"/>
    </location>
</feature>
<feature type="region of interest" description="G3" evidence="1">
    <location>
        <begin position="464"/>
        <end position="467"/>
    </location>
</feature>
<feature type="region of interest" description="G4" evidence="1">
    <location>
        <begin position="518"/>
        <end position="521"/>
    </location>
</feature>
<feature type="region of interest" description="G5" evidence="1">
    <location>
        <begin position="554"/>
        <end position="556"/>
    </location>
</feature>
<feature type="compositionally biased region" description="Polar residues" evidence="3">
    <location>
        <begin position="65"/>
        <end position="84"/>
    </location>
</feature>
<feature type="compositionally biased region" description="Basic and acidic residues" evidence="3">
    <location>
        <begin position="94"/>
        <end position="108"/>
    </location>
</feature>
<feature type="compositionally biased region" description="Basic and acidic residues" evidence="3">
    <location>
        <begin position="120"/>
        <end position="138"/>
    </location>
</feature>
<feature type="compositionally biased region" description="Basic and acidic residues" evidence="3">
    <location>
        <begin position="176"/>
        <end position="185"/>
    </location>
</feature>
<feature type="compositionally biased region" description="Basic and acidic residues" evidence="3">
    <location>
        <begin position="193"/>
        <end position="238"/>
    </location>
</feature>
<feature type="compositionally biased region" description="Basic and acidic residues" evidence="3">
    <location>
        <begin position="270"/>
        <end position="280"/>
    </location>
</feature>
<feature type="compositionally biased region" description="Basic and acidic residues" evidence="3">
    <location>
        <begin position="294"/>
        <end position="303"/>
    </location>
</feature>
<feature type="binding site" evidence="2">
    <location>
        <begin position="418"/>
        <end position="425"/>
    </location>
    <ligand>
        <name>GTP</name>
        <dbReference type="ChEBI" id="CHEBI:37565"/>
    </ligand>
</feature>
<feature type="binding site" evidence="2">
    <location>
        <begin position="464"/>
        <end position="468"/>
    </location>
    <ligand>
        <name>GTP</name>
        <dbReference type="ChEBI" id="CHEBI:37565"/>
    </ligand>
</feature>
<feature type="binding site" evidence="2">
    <location>
        <begin position="518"/>
        <end position="521"/>
    </location>
    <ligand>
        <name>GTP</name>
        <dbReference type="ChEBI" id="CHEBI:37565"/>
    </ligand>
</feature>
<evidence type="ECO:0000250" key="1"/>
<evidence type="ECO:0000255" key="2">
    <source>
        <dbReference type="HAMAP-Rule" id="MF_00100"/>
    </source>
</evidence>
<evidence type="ECO:0000256" key="3">
    <source>
        <dbReference type="SAM" id="MobiDB-lite"/>
    </source>
</evidence>
<comment type="function">
    <text evidence="2">One of the essential components for the initiation of protein synthesis. Protects formylmethionyl-tRNA from spontaneous hydrolysis and promotes its binding to the 30S ribosomal subunits. Also involved in the hydrolysis of GTP during the formation of the 70S ribosomal complex.</text>
</comment>
<comment type="subcellular location">
    <subcellularLocation>
        <location evidence="2">Cytoplasm</location>
    </subcellularLocation>
</comment>
<comment type="similarity">
    <text evidence="2">Belongs to the TRAFAC class translation factor GTPase superfamily. Classic translation factor GTPase family. IF-2 subfamily.</text>
</comment>
<reference key="1">
    <citation type="submission" date="2006-03" db="EMBL/GenBank/DDBJ databases">
        <title>Complete sequence of chromosome of Psychrobacter cryohalolentis K5.</title>
        <authorList>
            <consortium name="US DOE Joint Genome Institute"/>
            <person name="Copeland A."/>
            <person name="Lucas S."/>
            <person name="Lapidus A."/>
            <person name="Barry K."/>
            <person name="Detter J.C."/>
            <person name="Glavina T."/>
            <person name="Hammon N."/>
            <person name="Israni S."/>
            <person name="Dalin E."/>
            <person name="Tice H."/>
            <person name="Pitluck S."/>
            <person name="Brettin T."/>
            <person name="Bruce D."/>
            <person name="Han C."/>
            <person name="Tapia R."/>
            <person name="Sims D.R."/>
            <person name="Gilna P."/>
            <person name="Schmutz J."/>
            <person name="Larimer F."/>
            <person name="Land M."/>
            <person name="Hauser L."/>
            <person name="Kyrpides N."/>
            <person name="Kim E."/>
            <person name="Richardson P."/>
        </authorList>
    </citation>
    <scope>NUCLEOTIDE SEQUENCE [LARGE SCALE GENOMIC DNA]</scope>
    <source>
        <strain>ATCC BAA-1226 / DSM 17306 / VKM B-2378 / K5</strain>
    </source>
</reference>
<proteinExistence type="inferred from homology"/>
<gene>
    <name evidence="2" type="primary">infB</name>
    <name type="ordered locus">Pcryo_0074</name>
</gene>
<organism>
    <name type="scientific">Psychrobacter cryohalolentis (strain ATCC BAA-1226 / DSM 17306 / VKM B-2378 / K5)</name>
    <dbReference type="NCBI Taxonomy" id="335284"/>
    <lineage>
        <taxon>Bacteria</taxon>
        <taxon>Pseudomonadati</taxon>
        <taxon>Pseudomonadota</taxon>
        <taxon>Gammaproteobacteria</taxon>
        <taxon>Moraxellales</taxon>
        <taxon>Moraxellaceae</taxon>
        <taxon>Psychrobacter</taxon>
    </lineage>
</organism>
<accession>Q1QEP5</accession>
<protein>
    <recommendedName>
        <fullName evidence="2">Translation initiation factor IF-2</fullName>
    </recommendedName>
</protein>
<keyword id="KW-0963">Cytoplasm</keyword>
<keyword id="KW-0342">GTP-binding</keyword>
<keyword id="KW-0396">Initiation factor</keyword>
<keyword id="KW-0547">Nucleotide-binding</keyword>
<keyword id="KW-0648">Protein biosynthesis</keyword>
<dbReference type="EMBL" id="CP000323">
    <property type="protein sequence ID" value="ABE73858.1"/>
    <property type="molecule type" value="Genomic_DNA"/>
</dbReference>
<dbReference type="RefSeq" id="WP_011512449.1">
    <property type="nucleotide sequence ID" value="NC_007969.1"/>
</dbReference>
<dbReference type="SMR" id="Q1QEP5"/>
<dbReference type="STRING" id="335284.Pcryo_0074"/>
<dbReference type="KEGG" id="pcr:Pcryo_0074"/>
<dbReference type="eggNOG" id="COG0532">
    <property type="taxonomic scope" value="Bacteria"/>
</dbReference>
<dbReference type="HOGENOM" id="CLU_006301_6_3_6"/>
<dbReference type="Proteomes" id="UP000002425">
    <property type="component" value="Chromosome"/>
</dbReference>
<dbReference type="GO" id="GO:0005829">
    <property type="term" value="C:cytosol"/>
    <property type="evidence" value="ECO:0007669"/>
    <property type="project" value="TreeGrafter"/>
</dbReference>
<dbReference type="GO" id="GO:0005525">
    <property type="term" value="F:GTP binding"/>
    <property type="evidence" value="ECO:0007669"/>
    <property type="project" value="UniProtKB-KW"/>
</dbReference>
<dbReference type="GO" id="GO:0003924">
    <property type="term" value="F:GTPase activity"/>
    <property type="evidence" value="ECO:0007669"/>
    <property type="project" value="UniProtKB-UniRule"/>
</dbReference>
<dbReference type="GO" id="GO:0003743">
    <property type="term" value="F:translation initiation factor activity"/>
    <property type="evidence" value="ECO:0007669"/>
    <property type="project" value="UniProtKB-UniRule"/>
</dbReference>
<dbReference type="CDD" id="cd01887">
    <property type="entry name" value="IF2_eIF5B"/>
    <property type="match status" value="1"/>
</dbReference>
<dbReference type="CDD" id="cd03702">
    <property type="entry name" value="IF2_mtIF2_II"/>
    <property type="match status" value="1"/>
</dbReference>
<dbReference type="CDD" id="cd03692">
    <property type="entry name" value="mtIF2_IVc"/>
    <property type="match status" value="1"/>
</dbReference>
<dbReference type="FunFam" id="2.40.30.10:FF:000007">
    <property type="entry name" value="Translation initiation factor IF-2"/>
    <property type="match status" value="1"/>
</dbReference>
<dbReference type="FunFam" id="2.40.30.10:FF:000008">
    <property type="entry name" value="Translation initiation factor IF-2"/>
    <property type="match status" value="1"/>
</dbReference>
<dbReference type="FunFam" id="3.40.50.10050:FF:000001">
    <property type="entry name" value="Translation initiation factor IF-2"/>
    <property type="match status" value="1"/>
</dbReference>
<dbReference type="FunFam" id="3.40.50.300:FF:000019">
    <property type="entry name" value="Translation initiation factor IF-2"/>
    <property type="match status" value="1"/>
</dbReference>
<dbReference type="Gene3D" id="3.40.50.300">
    <property type="entry name" value="P-loop containing nucleotide triphosphate hydrolases"/>
    <property type="match status" value="1"/>
</dbReference>
<dbReference type="Gene3D" id="3.30.56.50">
    <property type="entry name" value="Putative DNA-binding domain, N-terminal subdomain of bacterial translation initiation factor IF2"/>
    <property type="match status" value="1"/>
</dbReference>
<dbReference type="Gene3D" id="2.40.30.10">
    <property type="entry name" value="Translation factors"/>
    <property type="match status" value="2"/>
</dbReference>
<dbReference type="Gene3D" id="3.40.50.10050">
    <property type="entry name" value="Translation initiation factor IF- 2, domain 3"/>
    <property type="match status" value="1"/>
</dbReference>
<dbReference type="HAMAP" id="MF_00100_B">
    <property type="entry name" value="IF_2_B"/>
    <property type="match status" value="1"/>
</dbReference>
<dbReference type="InterPro" id="IPR009061">
    <property type="entry name" value="DNA-bd_dom_put_sf"/>
</dbReference>
<dbReference type="InterPro" id="IPR053905">
    <property type="entry name" value="EF-G-like_DII"/>
</dbReference>
<dbReference type="InterPro" id="IPR013575">
    <property type="entry name" value="IF2_assoc_dom_bac"/>
</dbReference>
<dbReference type="InterPro" id="IPR044145">
    <property type="entry name" value="IF2_II"/>
</dbReference>
<dbReference type="InterPro" id="IPR006847">
    <property type="entry name" value="IF2_N"/>
</dbReference>
<dbReference type="InterPro" id="IPR027417">
    <property type="entry name" value="P-loop_NTPase"/>
</dbReference>
<dbReference type="InterPro" id="IPR005225">
    <property type="entry name" value="Small_GTP-bd"/>
</dbReference>
<dbReference type="InterPro" id="IPR000795">
    <property type="entry name" value="T_Tr_GTP-bd_dom"/>
</dbReference>
<dbReference type="InterPro" id="IPR000178">
    <property type="entry name" value="TF_IF2_bacterial-like"/>
</dbReference>
<dbReference type="InterPro" id="IPR015760">
    <property type="entry name" value="TIF_IF2"/>
</dbReference>
<dbReference type="InterPro" id="IPR023115">
    <property type="entry name" value="TIF_IF2_dom3"/>
</dbReference>
<dbReference type="InterPro" id="IPR036925">
    <property type="entry name" value="TIF_IF2_dom3_sf"/>
</dbReference>
<dbReference type="InterPro" id="IPR009000">
    <property type="entry name" value="Transl_B-barrel_sf"/>
</dbReference>
<dbReference type="NCBIfam" id="TIGR00487">
    <property type="entry name" value="IF-2"/>
    <property type="match status" value="1"/>
</dbReference>
<dbReference type="NCBIfam" id="TIGR00231">
    <property type="entry name" value="small_GTP"/>
    <property type="match status" value="1"/>
</dbReference>
<dbReference type="PANTHER" id="PTHR43381:SF5">
    <property type="entry name" value="TR-TYPE G DOMAIN-CONTAINING PROTEIN"/>
    <property type="match status" value="1"/>
</dbReference>
<dbReference type="PANTHER" id="PTHR43381">
    <property type="entry name" value="TRANSLATION INITIATION FACTOR IF-2-RELATED"/>
    <property type="match status" value="1"/>
</dbReference>
<dbReference type="Pfam" id="PF22042">
    <property type="entry name" value="EF-G_D2"/>
    <property type="match status" value="1"/>
</dbReference>
<dbReference type="Pfam" id="PF00009">
    <property type="entry name" value="GTP_EFTU"/>
    <property type="match status" value="1"/>
</dbReference>
<dbReference type="Pfam" id="PF11987">
    <property type="entry name" value="IF-2"/>
    <property type="match status" value="1"/>
</dbReference>
<dbReference type="Pfam" id="PF08364">
    <property type="entry name" value="IF2_assoc"/>
    <property type="match status" value="1"/>
</dbReference>
<dbReference type="Pfam" id="PF04760">
    <property type="entry name" value="IF2_N"/>
    <property type="match status" value="1"/>
</dbReference>
<dbReference type="SUPFAM" id="SSF52156">
    <property type="entry name" value="Initiation factor IF2/eIF5b, domain 3"/>
    <property type="match status" value="1"/>
</dbReference>
<dbReference type="SUPFAM" id="SSF52540">
    <property type="entry name" value="P-loop containing nucleoside triphosphate hydrolases"/>
    <property type="match status" value="1"/>
</dbReference>
<dbReference type="SUPFAM" id="SSF46955">
    <property type="entry name" value="Putative DNA-binding domain"/>
    <property type="match status" value="1"/>
</dbReference>
<dbReference type="SUPFAM" id="SSF50447">
    <property type="entry name" value="Translation proteins"/>
    <property type="match status" value="2"/>
</dbReference>
<dbReference type="PROSITE" id="PS51722">
    <property type="entry name" value="G_TR_2"/>
    <property type="match status" value="1"/>
</dbReference>
<dbReference type="PROSITE" id="PS01176">
    <property type="entry name" value="IF2"/>
    <property type="match status" value="1"/>
</dbReference>